<proteinExistence type="inferred from homology"/>
<evidence type="ECO:0000255" key="1">
    <source>
        <dbReference type="HAMAP-Rule" id="MF_00332"/>
    </source>
</evidence>
<evidence type="ECO:0000256" key="2">
    <source>
        <dbReference type="SAM" id="MobiDB-lite"/>
    </source>
</evidence>
<comment type="function">
    <text evidence="1">Acts as a chaperone.</text>
</comment>
<comment type="induction">
    <text evidence="1">By stress conditions e.g. heat shock.</text>
</comment>
<comment type="similarity">
    <text evidence="1">Belongs to the heat shock protein 70 family.</text>
</comment>
<feature type="chain" id="PRO_1000079224" description="Chaperone protein DnaK">
    <location>
        <begin position="1"/>
        <end position="636"/>
    </location>
</feature>
<feature type="region of interest" description="Disordered" evidence="2">
    <location>
        <begin position="602"/>
        <end position="636"/>
    </location>
</feature>
<feature type="compositionally biased region" description="Basic and acidic residues" evidence="2">
    <location>
        <begin position="618"/>
        <end position="636"/>
    </location>
</feature>
<feature type="modified residue" description="Phosphothreonine; by autocatalysis" evidence="1">
    <location>
        <position position="203"/>
    </location>
</feature>
<dbReference type="EMBL" id="CP000688">
    <property type="protein sequence ID" value="ABQ17787.1"/>
    <property type="molecule type" value="Genomic_DNA"/>
</dbReference>
<dbReference type="SMR" id="A5FPU4"/>
<dbReference type="KEGG" id="deb:DehaBAV1_1208"/>
<dbReference type="PATRIC" id="fig|216389.18.peg.1275"/>
<dbReference type="HOGENOM" id="CLU_005965_2_1_0"/>
<dbReference type="GO" id="GO:0005524">
    <property type="term" value="F:ATP binding"/>
    <property type="evidence" value="ECO:0007669"/>
    <property type="project" value="UniProtKB-UniRule"/>
</dbReference>
<dbReference type="GO" id="GO:0140662">
    <property type="term" value="F:ATP-dependent protein folding chaperone"/>
    <property type="evidence" value="ECO:0007669"/>
    <property type="project" value="InterPro"/>
</dbReference>
<dbReference type="GO" id="GO:0051082">
    <property type="term" value="F:unfolded protein binding"/>
    <property type="evidence" value="ECO:0007669"/>
    <property type="project" value="InterPro"/>
</dbReference>
<dbReference type="CDD" id="cd10234">
    <property type="entry name" value="ASKHA_NBD_HSP70_DnaK-like"/>
    <property type="match status" value="1"/>
</dbReference>
<dbReference type="FunFam" id="2.60.34.10:FF:000014">
    <property type="entry name" value="Chaperone protein DnaK HSP70"/>
    <property type="match status" value="1"/>
</dbReference>
<dbReference type="FunFam" id="1.20.1270.10:FF:000001">
    <property type="entry name" value="Molecular chaperone DnaK"/>
    <property type="match status" value="1"/>
</dbReference>
<dbReference type="FunFam" id="3.30.420.40:FF:000004">
    <property type="entry name" value="Molecular chaperone DnaK"/>
    <property type="match status" value="1"/>
</dbReference>
<dbReference type="FunFam" id="3.90.640.10:FF:000003">
    <property type="entry name" value="Molecular chaperone DnaK"/>
    <property type="match status" value="1"/>
</dbReference>
<dbReference type="Gene3D" id="1.20.1270.10">
    <property type="match status" value="1"/>
</dbReference>
<dbReference type="Gene3D" id="3.30.420.40">
    <property type="match status" value="2"/>
</dbReference>
<dbReference type="Gene3D" id="3.90.640.10">
    <property type="entry name" value="Actin, Chain A, domain 4"/>
    <property type="match status" value="1"/>
</dbReference>
<dbReference type="Gene3D" id="2.60.34.10">
    <property type="entry name" value="Substrate Binding Domain Of DNAk, Chain A, domain 1"/>
    <property type="match status" value="1"/>
</dbReference>
<dbReference type="HAMAP" id="MF_00332">
    <property type="entry name" value="DnaK"/>
    <property type="match status" value="1"/>
</dbReference>
<dbReference type="InterPro" id="IPR043129">
    <property type="entry name" value="ATPase_NBD"/>
</dbReference>
<dbReference type="InterPro" id="IPR012725">
    <property type="entry name" value="Chaperone_DnaK"/>
</dbReference>
<dbReference type="InterPro" id="IPR018181">
    <property type="entry name" value="Heat_shock_70_CS"/>
</dbReference>
<dbReference type="InterPro" id="IPR029048">
    <property type="entry name" value="HSP70_C_sf"/>
</dbReference>
<dbReference type="InterPro" id="IPR029047">
    <property type="entry name" value="HSP70_peptide-bd_sf"/>
</dbReference>
<dbReference type="InterPro" id="IPR013126">
    <property type="entry name" value="Hsp_70_fam"/>
</dbReference>
<dbReference type="NCBIfam" id="NF001413">
    <property type="entry name" value="PRK00290.1"/>
    <property type="match status" value="1"/>
</dbReference>
<dbReference type="NCBIfam" id="NF003520">
    <property type="entry name" value="PRK05183.1"/>
    <property type="match status" value="1"/>
</dbReference>
<dbReference type="NCBIfam" id="TIGR02350">
    <property type="entry name" value="prok_dnaK"/>
    <property type="match status" value="1"/>
</dbReference>
<dbReference type="PANTHER" id="PTHR19375">
    <property type="entry name" value="HEAT SHOCK PROTEIN 70KDA"/>
    <property type="match status" value="1"/>
</dbReference>
<dbReference type="Pfam" id="PF00012">
    <property type="entry name" value="HSP70"/>
    <property type="match status" value="1"/>
</dbReference>
<dbReference type="PRINTS" id="PR00301">
    <property type="entry name" value="HEATSHOCK70"/>
</dbReference>
<dbReference type="SUPFAM" id="SSF53067">
    <property type="entry name" value="Actin-like ATPase domain"/>
    <property type="match status" value="2"/>
</dbReference>
<dbReference type="SUPFAM" id="SSF100920">
    <property type="entry name" value="Heat shock protein 70kD (HSP70), peptide-binding domain"/>
    <property type="match status" value="1"/>
</dbReference>
<dbReference type="PROSITE" id="PS00297">
    <property type="entry name" value="HSP70_1"/>
    <property type="match status" value="1"/>
</dbReference>
<dbReference type="PROSITE" id="PS00329">
    <property type="entry name" value="HSP70_2"/>
    <property type="match status" value="1"/>
</dbReference>
<dbReference type="PROSITE" id="PS01036">
    <property type="entry name" value="HSP70_3"/>
    <property type="match status" value="1"/>
</dbReference>
<protein>
    <recommendedName>
        <fullName evidence="1">Chaperone protein DnaK</fullName>
    </recommendedName>
    <alternativeName>
        <fullName evidence="1">HSP70</fullName>
    </alternativeName>
    <alternativeName>
        <fullName evidence="1">Heat shock 70 kDa protein</fullName>
    </alternativeName>
    <alternativeName>
        <fullName evidence="1">Heat shock protein 70</fullName>
    </alternativeName>
</protein>
<keyword id="KW-0067">ATP-binding</keyword>
<keyword id="KW-0143">Chaperone</keyword>
<keyword id="KW-0547">Nucleotide-binding</keyword>
<keyword id="KW-0597">Phosphoprotein</keyword>
<keyword id="KW-0346">Stress response</keyword>
<gene>
    <name evidence="1" type="primary">dnaK</name>
    <name type="ordered locus">DehaBAV1_1208</name>
</gene>
<sequence length="636" mass="68491">MGKVVGIDLGTTNSEVAVMQGGEPVVIPSAEGSTLIPSVVAINKNGERIVGRQAKNQAILNPENTVYSIKRFMGRKWGEPAGRELPVEADAKRKPYKVIQGNNNEVRVVMGDKDFSPPEVSAMILQKLKSDAEAYLGEKVTEAVITVPAYFNDAQRQATKDAGAIAGLKVLRIINEPTAAALAYGLDKKKDETIAVYDLGGGTFDISILELGEGTFQVKSTAGDTHLGGDDFDQKIIDWLIAEYKKDQGIDLSKDKTALQRLKEAAEKAKIELSTVQQTEINLPFITADASGPKHLNIILTRSKLEQMVMDLVEKSLEPCRQALKDSGKTSAEINEVILVGGQTRMPLVQQKVKDFFGKEPNKGVNPDEVVAIGAAIQAGVLKGEVSDVLLLDVIPLTLGIETLGGVSTALITRNTTIPTSKSQVFSTAADNQPSVEIHVLQGERPMAADNRTLGRFMLDGILPAPRGVPQIEVTFDIDANGMLSVKAKDKGTGREQKITITASSGLSKEEVEKMTREAEAHAAEDTKRKEEIEARNVADNLAYNAEKTLRDNKDKIPAELNTELESKIAAVRTALQGNDVEAIKKTTQELSTALQSVGSAVYGKQQEGAPAQEEPSAEGKKADDEGTVEGEFREV</sequence>
<organism>
    <name type="scientific">Dehalococcoides mccartyi (strain ATCC BAA-2100 / JCM 16839 / KCTC 5957 / BAV1)</name>
    <dbReference type="NCBI Taxonomy" id="216389"/>
    <lineage>
        <taxon>Bacteria</taxon>
        <taxon>Bacillati</taxon>
        <taxon>Chloroflexota</taxon>
        <taxon>Dehalococcoidia</taxon>
        <taxon>Dehalococcoidales</taxon>
        <taxon>Dehalococcoidaceae</taxon>
        <taxon>Dehalococcoides</taxon>
    </lineage>
</organism>
<name>DNAK_DEHMB</name>
<accession>A5FPU4</accession>
<reference key="1">
    <citation type="submission" date="2007-05" db="EMBL/GenBank/DDBJ databases">
        <title>Complete sequence of Dehalococcoides sp. BAV1.</title>
        <authorList>
            <consortium name="US DOE Joint Genome Institute"/>
            <person name="Copeland A."/>
            <person name="Lucas S."/>
            <person name="Lapidus A."/>
            <person name="Barry K."/>
            <person name="Detter J.C."/>
            <person name="Glavina del Rio T."/>
            <person name="Hammon N."/>
            <person name="Israni S."/>
            <person name="Pitluck S."/>
            <person name="Lowry S."/>
            <person name="Clum A."/>
            <person name="Schmutz J."/>
            <person name="Larimer F."/>
            <person name="Land M."/>
            <person name="Hauser L."/>
            <person name="Kyrpides N."/>
            <person name="Kim E."/>
            <person name="Ritalahti K.M."/>
            <person name="Loeffler F."/>
            <person name="Richardson P."/>
        </authorList>
    </citation>
    <scope>NUCLEOTIDE SEQUENCE [LARGE SCALE GENOMIC DNA]</scope>
    <source>
        <strain>ATCC BAA-2100 / JCM 16839 / KCTC 5957 / BAV1</strain>
    </source>
</reference>